<name>CYCO_CLITE</name>
<sequence length="30" mass="3110">GIPCGESCVFIPCITGIAGCSCKSKVCYRN</sequence>
<evidence type="ECO:0000250" key="1">
    <source>
        <dbReference type="UniProtKB" id="P86899"/>
    </source>
</evidence>
<evidence type="ECO:0000255" key="2">
    <source>
        <dbReference type="PROSITE-ProRule" id="PRU00395"/>
    </source>
</evidence>
<evidence type="ECO:0000269" key="3">
    <source>
    </source>
</evidence>
<evidence type="ECO:0000303" key="4">
    <source>
    </source>
</evidence>
<evidence type="ECO:0000305" key="5"/>
<reference evidence="5" key="1">
    <citation type="journal article" date="2011" name="Proc. Natl. Acad. Sci. U.S.A.">
        <title>Discovery of an unusual biosynthetic origin for circular proteins in legumes.</title>
        <authorList>
            <person name="Poth A.G."/>
            <person name="Colgrave M.L."/>
            <person name="Lyons R.E."/>
            <person name="Daly N.L."/>
            <person name="Craik D.J."/>
        </authorList>
    </citation>
    <scope>PROTEIN SEQUENCE</scope>
    <scope>CYCLIZATION</scope>
    <scope>MASS SPECTROMETRY</scope>
    <source>
        <tissue evidence="3">Leaf</tissue>
    </source>
</reference>
<organism>
    <name type="scientific">Clitoria ternatea</name>
    <name type="common">Butterfly pea</name>
    <dbReference type="NCBI Taxonomy" id="43366"/>
    <lineage>
        <taxon>Eukaryota</taxon>
        <taxon>Viridiplantae</taxon>
        <taxon>Streptophyta</taxon>
        <taxon>Embryophyta</taxon>
        <taxon>Tracheophyta</taxon>
        <taxon>Spermatophyta</taxon>
        <taxon>Magnoliopsida</taxon>
        <taxon>eudicotyledons</taxon>
        <taxon>Gunneridae</taxon>
        <taxon>Pentapetalae</taxon>
        <taxon>rosids</taxon>
        <taxon>fabids</taxon>
        <taxon>Fabales</taxon>
        <taxon>Fabaceae</taxon>
        <taxon>Papilionoideae</taxon>
        <taxon>50 kb inversion clade</taxon>
        <taxon>NPAAA clade</taxon>
        <taxon>indigoferoid/millettioid clade</taxon>
        <taxon>Phaseoleae</taxon>
        <taxon>Clitoria</taxon>
    </lineage>
</organism>
<feature type="peptide" id="PRO_0000412640" description="Cyclotide cter-O" evidence="2 3">
    <location>
        <begin position="1"/>
        <end position="30"/>
    </location>
</feature>
<feature type="disulfide bond" evidence="1 2">
    <location>
        <begin position="4"/>
        <end position="20"/>
    </location>
</feature>
<feature type="disulfide bond" evidence="1 2">
    <location>
        <begin position="8"/>
        <end position="22"/>
    </location>
</feature>
<feature type="disulfide bond" evidence="1 2">
    <location>
        <begin position="13"/>
        <end position="27"/>
    </location>
</feature>
<feature type="cross-link" description="Cyclopeptide (Gly-Asn)" evidence="3">
    <location>
        <begin position="1"/>
        <end position="30"/>
    </location>
</feature>
<accession>P86901</accession>
<dbReference type="SMR" id="P86901"/>
<dbReference type="GO" id="GO:0005576">
    <property type="term" value="C:extracellular region"/>
    <property type="evidence" value="ECO:0007669"/>
    <property type="project" value="UniProtKB-SubCell"/>
</dbReference>
<dbReference type="GO" id="GO:0006952">
    <property type="term" value="P:defense response"/>
    <property type="evidence" value="ECO:0007669"/>
    <property type="project" value="UniProtKB-KW"/>
</dbReference>
<dbReference type="InterPro" id="IPR005535">
    <property type="entry name" value="Cyclotide"/>
</dbReference>
<dbReference type="InterPro" id="IPR012323">
    <property type="entry name" value="Cyclotide_bracelet_CS"/>
</dbReference>
<dbReference type="InterPro" id="IPR036146">
    <property type="entry name" value="Cyclotide_sf"/>
</dbReference>
<dbReference type="Pfam" id="PF03784">
    <property type="entry name" value="Cyclotide"/>
    <property type="match status" value="1"/>
</dbReference>
<dbReference type="PIRSF" id="PIRSF037891">
    <property type="entry name" value="Cycloviolacin"/>
    <property type="match status" value="1"/>
</dbReference>
<dbReference type="SUPFAM" id="SSF57038">
    <property type="entry name" value="Cyclotides"/>
    <property type="match status" value="1"/>
</dbReference>
<dbReference type="PROSITE" id="PS51052">
    <property type="entry name" value="CYCLOTIDE"/>
    <property type="match status" value="1"/>
</dbReference>
<dbReference type="PROSITE" id="PS60008">
    <property type="entry name" value="CYCLOTIDE_BRACELET"/>
    <property type="match status" value="1"/>
</dbReference>
<protein>
    <recommendedName>
        <fullName evidence="4">Cyclotide cter-O</fullName>
    </recommendedName>
</protein>
<comment type="function">
    <text evidence="1 2">Probably participates in a plant defense mechanism.</text>
</comment>
<comment type="subcellular location">
    <subcellularLocation>
        <location evidence="1">Secreted</location>
    </subcellularLocation>
</comment>
<comment type="domain">
    <text evidence="5">The presence of a 'disulfide through disulfide knot' structurally defines this protein as a knottin.</text>
</comment>
<comment type="PTM">
    <text evidence="2 3">This is a cyclic peptide.</text>
</comment>
<comment type="mass spectrometry" mass="3083.42" method="MALDI" evidence="3"/>
<comment type="similarity">
    <text evidence="2">Belongs to the cyclotide family. Bracelet subfamily.</text>
</comment>
<comment type="caution">
    <text evidence="5">This peptide is cyclic. The start position was chosen by similarity to cyclotide cter-A for which the DNA sequence is known.</text>
</comment>
<keyword id="KW-0903">Direct protein sequencing</keyword>
<keyword id="KW-1015">Disulfide bond</keyword>
<keyword id="KW-0960">Knottin</keyword>
<keyword id="KW-0558">Oxidation</keyword>
<keyword id="KW-0611">Plant defense</keyword>
<keyword id="KW-0964">Secreted</keyword>
<proteinExistence type="evidence at protein level"/>